<reference key="1">
    <citation type="journal article" date="2003" name="Proc. Natl. Acad. Sci. U.S.A.">
        <title>The genome sequence of Clostridium tetani, the causative agent of tetanus disease.</title>
        <authorList>
            <person name="Brueggemann H."/>
            <person name="Baeumer S."/>
            <person name="Fricke W.F."/>
            <person name="Wiezer A."/>
            <person name="Liesegang H."/>
            <person name="Decker I."/>
            <person name="Herzberg C."/>
            <person name="Martinez-Arias R."/>
            <person name="Merkl R."/>
            <person name="Henne A."/>
            <person name="Gottschalk G."/>
        </authorList>
    </citation>
    <scope>NUCLEOTIDE SEQUENCE [LARGE SCALE GENOMIC DNA]</scope>
    <source>
        <strain>Massachusetts / E88</strain>
    </source>
</reference>
<name>SYV_CLOTE</name>
<organism>
    <name type="scientific">Clostridium tetani (strain Massachusetts / E88)</name>
    <dbReference type="NCBI Taxonomy" id="212717"/>
    <lineage>
        <taxon>Bacteria</taxon>
        <taxon>Bacillati</taxon>
        <taxon>Bacillota</taxon>
        <taxon>Clostridia</taxon>
        <taxon>Eubacteriales</taxon>
        <taxon>Clostridiaceae</taxon>
        <taxon>Clostridium</taxon>
    </lineage>
</organism>
<proteinExistence type="inferred from homology"/>
<sequence>MNDNINIAKTYDPKEFEERIYKMWEEGEYFTPKVDKDKKPYTIVMPPPNITGKLHLGHALDNSMQDFLIRVKRMQGYSTLWLPGQDHASIATEVKVENELLKTGLKKKEMGREAFLERVWEWSEEYRGRIRDQLKKLGSSADFTRESFTMDDNLDKAVRAVFVKLYEEGLIYKGNRIVNWCPKCMTALSDAEIEYEENYGNFWHVKYPLVDSEEYLEIATTRPETMLGDTAVAVNPNDERYKHLIGKKLMLPLVNREIPIVADDYVDVEFGTGAVKITPAHDPNDYEVGKRHDLEEIIIMNENGTINELGGKYSGMDRYEARKAIVEDLKKEGFLVKVKEHIHNVSCHDRCNTIIEPMISKQWYVKMKELAKPAIEVVKSGEIKFVPERFDKTYFNWMENIQDWCISRQLWWGHRIPVWYCKDCGETIVSLEEAKKCSKCSSENLIQDEDVLDTWFSSALWPFSTLGWPDKTEDLEYFYPTDVLATGYDIIFFWVARMIFSGLHNMKEIPFKTVLIHGIVRDSEGKKMSKSLGNGVDPLEVIDKYGADALRFMLITGNAPGNDIRFYEERVESARNFANKIWNASRYVMMNLDKNLMEKYKDCKDYNIADTWILSRLNEVIKEVTDNIEKFELGMASQKVYDFMWNEFCDWYIELSKPVLYGEDEKAKGVTFNVLFNVLTSGLKLLHPIMPFITEEIFINIQEEEKTITTSKWPEFKEELKNEEVEKKMSHVIEAIKAIRNVRIEMDVPPSRKAKIMIYALDGIDAFKDGKIYFEKLASASEVEFLNSKEEAPENAVSAVTKGAEIYIPLFDLVDLEKEMERLNKEREKLEKEIERVDKKLSNENFVKKAPEAVVNEEKAKGEKYKEMLEAVLERIKSLK</sequence>
<feature type="chain" id="PRO_0000224463" description="Valine--tRNA ligase">
    <location>
        <begin position="1"/>
        <end position="880"/>
    </location>
</feature>
<feature type="coiled-coil region" evidence="1">
    <location>
        <begin position="717"/>
        <end position="741"/>
    </location>
</feature>
<feature type="coiled-coil region" evidence="1">
    <location>
        <begin position="810"/>
        <end position="880"/>
    </location>
</feature>
<feature type="short sequence motif" description="'HIGH' region">
    <location>
        <begin position="48"/>
        <end position="58"/>
    </location>
</feature>
<feature type="short sequence motif" description="'KMSKS' region">
    <location>
        <begin position="527"/>
        <end position="531"/>
    </location>
</feature>
<feature type="binding site" evidence="1">
    <location>
        <position position="530"/>
    </location>
    <ligand>
        <name>ATP</name>
        <dbReference type="ChEBI" id="CHEBI:30616"/>
    </ligand>
</feature>
<keyword id="KW-0030">Aminoacyl-tRNA synthetase</keyword>
<keyword id="KW-0067">ATP-binding</keyword>
<keyword id="KW-0175">Coiled coil</keyword>
<keyword id="KW-0963">Cytoplasm</keyword>
<keyword id="KW-0436">Ligase</keyword>
<keyword id="KW-0547">Nucleotide-binding</keyword>
<keyword id="KW-0648">Protein biosynthesis</keyword>
<keyword id="KW-1185">Reference proteome</keyword>
<protein>
    <recommendedName>
        <fullName evidence="1">Valine--tRNA ligase</fullName>
        <ecNumber evidence="1">6.1.1.9</ecNumber>
    </recommendedName>
    <alternativeName>
        <fullName evidence="1">Valyl-tRNA synthetase</fullName>
        <shortName evidence="1">ValRS</shortName>
    </alternativeName>
</protein>
<accession>Q891R5</accession>
<comment type="function">
    <text evidence="1">Catalyzes the attachment of valine to tRNA(Val). As ValRS can inadvertently accommodate and process structurally similar amino acids such as threonine, to avoid such errors, it has a 'posttransfer' editing activity that hydrolyzes mischarged Thr-tRNA(Val) in a tRNA-dependent manner.</text>
</comment>
<comment type="catalytic activity">
    <reaction evidence="1">
        <text>tRNA(Val) + L-valine + ATP = L-valyl-tRNA(Val) + AMP + diphosphate</text>
        <dbReference type="Rhea" id="RHEA:10704"/>
        <dbReference type="Rhea" id="RHEA-COMP:9672"/>
        <dbReference type="Rhea" id="RHEA-COMP:9708"/>
        <dbReference type="ChEBI" id="CHEBI:30616"/>
        <dbReference type="ChEBI" id="CHEBI:33019"/>
        <dbReference type="ChEBI" id="CHEBI:57762"/>
        <dbReference type="ChEBI" id="CHEBI:78442"/>
        <dbReference type="ChEBI" id="CHEBI:78537"/>
        <dbReference type="ChEBI" id="CHEBI:456215"/>
        <dbReference type="EC" id="6.1.1.9"/>
    </reaction>
</comment>
<comment type="subunit">
    <text evidence="1">Monomer.</text>
</comment>
<comment type="subcellular location">
    <subcellularLocation>
        <location evidence="1">Cytoplasm</location>
    </subcellularLocation>
</comment>
<comment type="domain">
    <text evidence="1">ValRS has two distinct active sites: one for aminoacylation and one for editing. The misactivated threonine is translocated from the active site to the editing site.</text>
</comment>
<comment type="domain">
    <text evidence="1">The C-terminal coiled-coil domain is crucial for aminoacylation activity.</text>
</comment>
<comment type="similarity">
    <text evidence="1">Belongs to the class-I aminoacyl-tRNA synthetase family. ValS type 1 subfamily.</text>
</comment>
<dbReference type="EC" id="6.1.1.9" evidence="1"/>
<dbReference type="EMBL" id="AE015927">
    <property type="protein sequence ID" value="AAO36780.1"/>
    <property type="molecule type" value="Genomic_DNA"/>
</dbReference>
<dbReference type="RefSeq" id="WP_011100441.1">
    <property type="nucleotide sequence ID" value="NC_004557.1"/>
</dbReference>
<dbReference type="SMR" id="Q891R5"/>
<dbReference type="STRING" id="212717.CTC_02302"/>
<dbReference type="GeneID" id="24253683"/>
<dbReference type="KEGG" id="ctc:CTC_02302"/>
<dbReference type="HOGENOM" id="CLU_001493_0_2_9"/>
<dbReference type="OrthoDB" id="9810365at2"/>
<dbReference type="Proteomes" id="UP000001412">
    <property type="component" value="Chromosome"/>
</dbReference>
<dbReference type="GO" id="GO:0005829">
    <property type="term" value="C:cytosol"/>
    <property type="evidence" value="ECO:0007669"/>
    <property type="project" value="TreeGrafter"/>
</dbReference>
<dbReference type="GO" id="GO:0002161">
    <property type="term" value="F:aminoacyl-tRNA deacylase activity"/>
    <property type="evidence" value="ECO:0007669"/>
    <property type="project" value="InterPro"/>
</dbReference>
<dbReference type="GO" id="GO:0005524">
    <property type="term" value="F:ATP binding"/>
    <property type="evidence" value="ECO:0007669"/>
    <property type="project" value="UniProtKB-UniRule"/>
</dbReference>
<dbReference type="GO" id="GO:0004832">
    <property type="term" value="F:valine-tRNA ligase activity"/>
    <property type="evidence" value="ECO:0007669"/>
    <property type="project" value="UniProtKB-UniRule"/>
</dbReference>
<dbReference type="GO" id="GO:0006438">
    <property type="term" value="P:valyl-tRNA aminoacylation"/>
    <property type="evidence" value="ECO:0007669"/>
    <property type="project" value="UniProtKB-UniRule"/>
</dbReference>
<dbReference type="CDD" id="cd07962">
    <property type="entry name" value="Anticodon_Ia_Val"/>
    <property type="match status" value="1"/>
</dbReference>
<dbReference type="CDD" id="cd00817">
    <property type="entry name" value="ValRS_core"/>
    <property type="match status" value="1"/>
</dbReference>
<dbReference type="FunFam" id="1.10.287.380:FF:000001">
    <property type="entry name" value="Valine--tRNA ligase"/>
    <property type="match status" value="1"/>
</dbReference>
<dbReference type="FunFam" id="1.10.730.10:FF:000014">
    <property type="entry name" value="Valine--tRNA ligase"/>
    <property type="match status" value="1"/>
</dbReference>
<dbReference type="FunFam" id="3.40.50.620:FF:000032">
    <property type="entry name" value="Valine--tRNA ligase"/>
    <property type="match status" value="1"/>
</dbReference>
<dbReference type="FunFam" id="3.40.50.620:FF:000073">
    <property type="entry name" value="Valine--tRNA ligase"/>
    <property type="match status" value="1"/>
</dbReference>
<dbReference type="FunFam" id="3.90.740.10:FF:000005">
    <property type="entry name" value="Valine--tRNA ligase, mitochondrial"/>
    <property type="match status" value="1"/>
</dbReference>
<dbReference type="Gene3D" id="2.170.220.10">
    <property type="match status" value="1"/>
</dbReference>
<dbReference type="Gene3D" id="3.40.50.620">
    <property type="entry name" value="HUPs"/>
    <property type="match status" value="2"/>
</dbReference>
<dbReference type="Gene3D" id="1.10.730.10">
    <property type="entry name" value="Isoleucyl-tRNA Synthetase, Domain 1"/>
    <property type="match status" value="1"/>
</dbReference>
<dbReference type="Gene3D" id="1.10.287.380">
    <property type="entry name" value="Valyl-tRNA synthetase, C-terminal domain"/>
    <property type="match status" value="1"/>
</dbReference>
<dbReference type="Gene3D" id="3.90.740.10">
    <property type="entry name" value="Valyl/Leucyl/Isoleucyl-tRNA synthetase, editing domain"/>
    <property type="match status" value="1"/>
</dbReference>
<dbReference type="HAMAP" id="MF_02004">
    <property type="entry name" value="Val_tRNA_synth_type1"/>
    <property type="match status" value="1"/>
</dbReference>
<dbReference type="InterPro" id="IPR001412">
    <property type="entry name" value="aa-tRNA-synth_I_CS"/>
</dbReference>
<dbReference type="InterPro" id="IPR002300">
    <property type="entry name" value="aa-tRNA-synth_Ia"/>
</dbReference>
<dbReference type="InterPro" id="IPR033705">
    <property type="entry name" value="Anticodon_Ia_Val"/>
</dbReference>
<dbReference type="InterPro" id="IPR013155">
    <property type="entry name" value="M/V/L/I-tRNA-synth_anticd-bd"/>
</dbReference>
<dbReference type="InterPro" id="IPR014729">
    <property type="entry name" value="Rossmann-like_a/b/a_fold"/>
</dbReference>
<dbReference type="InterPro" id="IPR010978">
    <property type="entry name" value="tRNA-bd_arm"/>
</dbReference>
<dbReference type="InterPro" id="IPR009080">
    <property type="entry name" value="tRNAsynth_Ia_anticodon-bd"/>
</dbReference>
<dbReference type="InterPro" id="IPR037118">
    <property type="entry name" value="Val-tRNA_synth_C_sf"/>
</dbReference>
<dbReference type="InterPro" id="IPR019499">
    <property type="entry name" value="Val-tRNA_synth_tRNA-bd"/>
</dbReference>
<dbReference type="InterPro" id="IPR009008">
    <property type="entry name" value="Val/Leu/Ile-tRNA-synth_edit"/>
</dbReference>
<dbReference type="InterPro" id="IPR002303">
    <property type="entry name" value="Valyl-tRNA_ligase"/>
</dbReference>
<dbReference type="NCBIfam" id="NF004349">
    <property type="entry name" value="PRK05729.1"/>
    <property type="match status" value="1"/>
</dbReference>
<dbReference type="NCBIfam" id="TIGR00422">
    <property type="entry name" value="valS"/>
    <property type="match status" value="1"/>
</dbReference>
<dbReference type="PANTHER" id="PTHR11946:SF93">
    <property type="entry name" value="VALINE--TRNA LIGASE, CHLOROPLASTIC_MITOCHONDRIAL 2"/>
    <property type="match status" value="1"/>
</dbReference>
<dbReference type="PANTHER" id="PTHR11946">
    <property type="entry name" value="VALYL-TRNA SYNTHETASES"/>
    <property type="match status" value="1"/>
</dbReference>
<dbReference type="Pfam" id="PF08264">
    <property type="entry name" value="Anticodon_1"/>
    <property type="match status" value="1"/>
</dbReference>
<dbReference type="Pfam" id="PF00133">
    <property type="entry name" value="tRNA-synt_1"/>
    <property type="match status" value="1"/>
</dbReference>
<dbReference type="Pfam" id="PF10458">
    <property type="entry name" value="Val_tRNA-synt_C"/>
    <property type="match status" value="1"/>
</dbReference>
<dbReference type="PRINTS" id="PR00986">
    <property type="entry name" value="TRNASYNTHVAL"/>
</dbReference>
<dbReference type="SUPFAM" id="SSF47323">
    <property type="entry name" value="Anticodon-binding domain of a subclass of class I aminoacyl-tRNA synthetases"/>
    <property type="match status" value="1"/>
</dbReference>
<dbReference type="SUPFAM" id="SSF52374">
    <property type="entry name" value="Nucleotidylyl transferase"/>
    <property type="match status" value="1"/>
</dbReference>
<dbReference type="SUPFAM" id="SSF46589">
    <property type="entry name" value="tRNA-binding arm"/>
    <property type="match status" value="1"/>
</dbReference>
<dbReference type="SUPFAM" id="SSF50677">
    <property type="entry name" value="ValRS/IleRS/LeuRS editing domain"/>
    <property type="match status" value="1"/>
</dbReference>
<dbReference type="PROSITE" id="PS00178">
    <property type="entry name" value="AA_TRNA_LIGASE_I"/>
    <property type="match status" value="1"/>
</dbReference>
<gene>
    <name evidence="1" type="primary">valS</name>
    <name type="ordered locus">CTC_02302</name>
</gene>
<evidence type="ECO:0000255" key="1">
    <source>
        <dbReference type="HAMAP-Rule" id="MF_02004"/>
    </source>
</evidence>